<accession>Q6B8Q1</accession>
<comment type="function">
    <text evidence="1">Might function to covalently attach a chromophore to Cys residue(s) of phycobiliproteins.</text>
</comment>
<comment type="subcellular location">
    <subcellularLocation>
        <location>Plastid</location>
        <location>Chloroplast</location>
    </subcellularLocation>
</comment>
<comment type="similarity">
    <text evidence="1">Belongs to the CpcS/CpeS biliprotein lyase family.</text>
</comment>
<protein>
    <recommendedName>
        <fullName evidence="1">Chromophore lyase CpcS/CpeS homolog</fullName>
        <ecNumber evidence="1">4.-.-.-</ecNumber>
    </recommendedName>
</protein>
<keyword id="KW-0150">Chloroplast</keyword>
<keyword id="KW-0456">Lyase</keyword>
<keyword id="KW-0934">Plastid</keyword>
<reference key="1">
    <citation type="journal article" date="2004" name="J. Mol. Evol.">
        <title>Comparative analysis of the complete plastid genome sequence of the red alga Gracilaria tenuistipitata var. liui provides insights into the evolution of rhodoplasts and their relationship to other plastids.</title>
        <authorList>
            <person name="Hagopian J.C."/>
            <person name="Reis M."/>
            <person name="Kitajima J.P."/>
            <person name="Bhattacharya D."/>
            <person name="de Oliveira M.C."/>
        </authorList>
    </citation>
    <scope>NUCLEOTIDE SEQUENCE [LARGE SCALE GENOMIC DNA]</scope>
</reference>
<organism>
    <name type="scientific">Gracilaria tenuistipitata var. liui</name>
    <name type="common">Red alga</name>
    <dbReference type="NCBI Taxonomy" id="285951"/>
    <lineage>
        <taxon>Eukaryota</taxon>
        <taxon>Rhodophyta</taxon>
        <taxon>Florideophyceae</taxon>
        <taxon>Rhodymeniophycidae</taxon>
        <taxon>Gracilariales</taxon>
        <taxon>Gracilariaceae</taxon>
        <taxon>Gracilaria</taxon>
        <taxon>Gracilaria tenuistipitata</taxon>
    </lineage>
</organism>
<sequence>MTYKNILDKLVGKWIHQRTSYFIHNQQIDYHQEEIKLKQIDNIYISTKDNNSLYQYELSNKINNQKIYYIFSKQEESEFGKLHKITNDEIKYYRFTIHTHNCIKIESVRENISYNEYIYLINNRFKITISILKRGQKYLATSFISEIKIFN</sequence>
<dbReference type="EC" id="4.-.-.-" evidence="1"/>
<dbReference type="EMBL" id="AY673996">
    <property type="protein sequence ID" value="AAT79734.1"/>
    <property type="molecule type" value="Genomic_DNA"/>
</dbReference>
<dbReference type="RefSeq" id="YP_063659.1">
    <property type="nucleotide sequence ID" value="NC_006137.1"/>
</dbReference>
<dbReference type="SMR" id="Q6B8Q1"/>
<dbReference type="GeneID" id="2944049"/>
<dbReference type="GO" id="GO:0009507">
    <property type="term" value="C:chloroplast"/>
    <property type="evidence" value="ECO:0007669"/>
    <property type="project" value="UniProtKB-SubCell"/>
</dbReference>
<dbReference type="GO" id="GO:0016829">
    <property type="term" value="F:lyase activity"/>
    <property type="evidence" value="ECO:0007669"/>
    <property type="project" value="UniProtKB-KW"/>
</dbReference>
<dbReference type="Gene3D" id="2.40.128.20">
    <property type="match status" value="1"/>
</dbReference>
<dbReference type="HAMAP" id="MF_01459">
    <property type="entry name" value="Chrphore_lyase_CpxS"/>
    <property type="match status" value="1"/>
</dbReference>
<dbReference type="InterPro" id="IPR012674">
    <property type="entry name" value="Calycin"/>
</dbReference>
<dbReference type="InterPro" id="IPR018536">
    <property type="entry name" value="CpcS/CpeS"/>
</dbReference>
<evidence type="ECO:0000255" key="1">
    <source>
        <dbReference type="HAMAP-Rule" id="MF_01459"/>
    </source>
</evidence>
<feature type="chain" id="PRO_0000277368" description="Chromophore lyase CpcS/CpeS homolog">
    <location>
        <begin position="1"/>
        <end position="151"/>
    </location>
</feature>
<geneLocation type="chloroplast"/>
<gene>
    <name evidence="1" type="primary">cpcS</name>
    <name evidence="1" type="synonym">ycf58</name>
    <name type="ordered locus">Grc000153</name>
</gene>
<proteinExistence type="inferred from homology"/>
<name>CPXS_GRATL</name>